<comment type="function">
    <text evidence="2 3">Channel protein that facilitates the transport of water, glycerol and hydrogen peroxide across membrane of cell or organelles guaranteeing intracellular homeostasis in several organes like liver, kidney and brain. In situation of stress, participates in endoplasmic reticulum (ER) homeostasis by regulating redox homeostasis through the transport of hydrogen peroxide across the endoplasmic reticulum membrane thereby regulating the oxidative stress through the NADPH oxidase 2 pathway (By similarity). Plays a role by maintaining an environment suitable for translation or protein foldings in the ER lumen namely by participating in the PKD1 glycosylation processing resulting in regulation of PKD1 membrane trafficking thereby preventing the accumulation of unfolding protein in ER. Plays a role in the proximal tubule function by regulating its endosomal acidification. May play a role in postnatal kidney development (By similarity).</text>
</comment>
<comment type="catalytic activity">
    <reaction evidence="3">
        <text>H2O(in) = H2O(out)</text>
        <dbReference type="Rhea" id="RHEA:29667"/>
        <dbReference type="ChEBI" id="CHEBI:15377"/>
    </reaction>
</comment>
<comment type="catalytic activity">
    <reaction evidence="3">
        <text>glycerol(in) = glycerol(out)</text>
        <dbReference type="Rhea" id="RHEA:29675"/>
        <dbReference type="ChEBI" id="CHEBI:17754"/>
    </reaction>
</comment>
<comment type="catalytic activity">
    <reaction evidence="3">
        <text>H2O2(out) = H2O2(in)</text>
        <dbReference type="Rhea" id="RHEA:74375"/>
        <dbReference type="ChEBI" id="CHEBI:16240"/>
    </reaction>
</comment>
<comment type="subunit">
    <text evidence="2 3">Homodimer; disulfide-linked. Homotetramer (By similarity). Can also form homomultimer (By similarity).</text>
</comment>
<comment type="subcellular location">
    <subcellularLocation>
        <location evidence="3">Endoplasmic reticulum membrane</location>
        <topology evidence="3">Multi-pass membrane protein</topology>
    </subcellularLocation>
    <subcellularLocation>
        <location evidence="3">Cytoplasmic vesicle membrane</location>
        <topology evidence="3">Multi-pass membrane protein</topology>
    </subcellularLocation>
    <subcellularLocation>
        <location evidence="1">Cell membrane</location>
        <topology evidence="3">Multi-pass membrane protein</topology>
    </subcellularLocation>
    <text evidence="3">Localizes mainly to the periphery of lipid droplets. Localizes to cytoplasmic vesicles in maturing spermatozoa. It accumulates partly in mitochondrial-associated endoplasmic reticulum membranes.</text>
</comment>
<comment type="tissue specificity">
    <text evidence="6 7">Expressed in retina specifically at retinal Mueller glial cells (PubMed:27107718). Expressed in adult testis, in the elongated spermatids (ES) and in residual bodies inside Sertoli cells (PubMed:19812234).</text>
</comment>
<comment type="domain">
    <text evidence="2">The NPC motif is essential for oligomerization and water permeability function.</text>
</comment>
<comment type="PTM">
    <text evidence="3">Not glycosylated.</text>
</comment>
<comment type="similarity">
    <text evidence="8">Belongs to the MIP/aquaporin (TC 1.A.8) family. AQP11/AQP12 subfamily.</text>
</comment>
<keyword id="KW-1003">Cell membrane</keyword>
<keyword id="KW-0968">Cytoplasmic vesicle</keyword>
<keyword id="KW-1015">Disulfide bond</keyword>
<keyword id="KW-0256">Endoplasmic reticulum</keyword>
<keyword id="KW-0472">Membrane</keyword>
<keyword id="KW-1185">Reference proteome</keyword>
<keyword id="KW-0677">Repeat</keyword>
<keyword id="KW-0812">Transmembrane</keyword>
<keyword id="KW-1133">Transmembrane helix</keyword>
<keyword id="KW-0813">Transport</keyword>
<dbReference type="EMBL" id="AB023644">
    <property type="protein sequence ID" value="BAC45003.1"/>
    <property type="molecule type" value="mRNA"/>
</dbReference>
<dbReference type="EMBL" id="BC078694">
    <property type="protein sequence ID" value="AAH78694.1"/>
    <property type="molecule type" value="mRNA"/>
</dbReference>
<dbReference type="RefSeq" id="NP_775128.1">
    <property type="nucleotide sequence ID" value="NM_173105.1"/>
</dbReference>
<dbReference type="SMR" id="Q8CHM1"/>
<dbReference type="FunCoup" id="Q8CHM1">
    <property type="interactions" value="239"/>
</dbReference>
<dbReference type="STRING" id="10116.ENSRNOP00000018091"/>
<dbReference type="PaxDb" id="10116-ENSRNOP00000018091"/>
<dbReference type="GeneID" id="286758"/>
<dbReference type="KEGG" id="rno:286758"/>
<dbReference type="UCSC" id="RGD:628763">
    <property type="organism name" value="rat"/>
</dbReference>
<dbReference type="AGR" id="RGD:628763"/>
<dbReference type="CTD" id="282679"/>
<dbReference type="RGD" id="628763">
    <property type="gene designation" value="Aqp11"/>
</dbReference>
<dbReference type="VEuPathDB" id="HostDB:ENSRNOG00000013358"/>
<dbReference type="eggNOG" id="ENOG502S15B">
    <property type="taxonomic scope" value="Eukaryota"/>
</dbReference>
<dbReference type="HOGENOM" id="CLU_074449_0_0_1"/>
<dbReference type="InParanoid" id="Q8CHM1"/>
<dbReference type="OrthoDB" id="66361at9989"/>
<dbReference type="PhylomeDB" id="Q8CHM1"/>
<dbReference type="TreeFam" id="TF320251"/>
<dbReference type="Reactome" id="R-RNO-432047">
    <property type="pathway name" value="Passive transport by Aquaporins"/>
</dbReference>
<dbReference type="PRO" id="PR:Q8CHM1"/>
<dbReference type="Proteomes" id="UP000002494">
    <property type="component" value="Chromosome 1"/>
</dbReference>
<dbReference type="Bgee" id="ENSRNOG00000013358">
    <property type="expression patterns" value="Expressed in testis and 16 other cell types or tissues"/>
</dbReference>
<dbReference type="GO" id="GO:0009986">
    <property type="term" value="C:cell surface"/>
    <property type="evidence" value="ECO:0000314"/>
    <property type="project" value="UniProtKB"/>
</dbReference>
<dbReference type="GO" id="GO:0005737">
    <property type="term" value="C:cytoplasm"/>
    <property type="evidence" value="ECO:0000266"/>
    <property type="project" value="RGD"/>
</dbReference>
<dbReference type="GO" id="GO:0030659">
    <property type="term" value="C:cytoplasmic vesicle membrane"/>
    <property type="evidence" value="ECO:0007669"/>
    <property type="project" value="UniProtKB-SubCell"/>
</dbReference>
<dbReference type="GO" id="GO:0030425">
    <property type="term" value="C:dendrite"/>
    <property type="evidence" value="ECO:0000314"/>
    <property type="project" value="RGD"/>
</dbReference>
<dbReference type="GO" id="GO:0005783">
    <property type="term" value="C:endoplasmic reticulum"/>
    <property type="evidence" value="ECO:0000250"/>
    <property type="project" value="UniProtKB"/>
</dbReference>
<dbReference type="GO" id="GO:0005789">
    <property type="term" value="C:endoplasmic reticulum membrane"/>
    <property type="evidence" value="ECO:0007669"/>
    <property type="project" value="UniProtKB-SubCell"/>
</dbReference>
<dbReference type="GO" id="GO:0005886">
    <property type="term" value="C:plasma membrane"/>
    <property type="evidence" value="ECO:0000266"/>
    <property type="project" value="RGD"/>
</dbReference>
<dbReference type="GO" id="GO:0015267">
    <property type="term" value="F:channel activity"/>
    <property type="evidence" value="ECO:0000318"/>
    <property type="project" value="GO_Central"/>
</dbReference>
<dbReference type="GO" id="GO:0015254">
    <property type="term" value="F:glycerol channel activity"/>
    <property type="evidence" value="ECO:0000250"/>
    <property type="project" value="UniProtKB"/>
</dbReference>
<dbReference type="GO" id="GO:0140070">
    <property type="term" value="F:hydrogen peroxide channel activity"/>
    <property type="evidence" value="ECO:0000266"/>
    <property type="project" value="RGD"/>
</dbReference>
<dbReference type="GO" id="GO:0042802">
    <property type="term" value="F:identical protein binding"/>
    <property type="evidence" value="ECO:0000353"/>
    <property type="project" value="RGD"/>
</dbReference>
<dbReference type="GO" id="GO:0015250">
    <property type="term" value="F:water channel activity"/>
    <property type="evidence" value="ECO:0000250"/>
    <property type="project" value="UniProtKB"/>
</dbReference>
<dbReference type="GO" id="GO:0048388">
    <property type="term" value="P:endosomal lumen acidification"/>
    <property type="evidence" value="ECO:0000266"/>
    <property type="project" value="RGD"/>
</dbReference>
<dbReference type="GO" id="GO:0015793">
    <property type="term" value="P:glycerol transmembrane transport"/>
    <property type="evidence" value="ECO:0000250"/>
    <property type="project" value="UniProtKB"/>
</dbReference>
<dbReference type="GO" id="GO:0080170">
    <property type="term" value="P:hydrogen peroxide transmembrane transport"/>
    <property type="evidence" value="ECO:0000250"/>
    <property type="project" value="UniProtKB"/>
</dbReference>
<dbReference type="GO" id="GO:0032364">
    <property type="term" value="P:intracellular oxygen homeostasis"/>
    <property type="evidence" value="ECO:0000266"/>
    <property type="project" value="RGD"/>
</dbReference>
<dbReference type="GO" id="GO:0009992">
    <property type="term" value="P:intracellular water homeostasis"/>
    <property type="evidence" value="ECO:0000250"/>
    <property type="project" value="UniProtKB"/>
</dbReference>
<dbReference type="GO" id="GO:0001822">
    <property type="term" value="P:kidney development"/>
    <property type="evidence" value="ECO:0000266"/>
    <property type="project" value="RGD"/>
</dbReference>
<dbReference type="GO" id="GO:0050680">
    <property type="term" value="P:negative regulation of epithelial cell proliferation"/>
    <property type="evidence" value="ECO:0000250"/>
    <property type="project" value="UniProtKB"/>
</dbReference>
<dbReference type="GO" id="GO:1904293">
    <property type="term" value="P:negative regulation of ERAD pathway"/>
    <property type="evidence" value="ECO:0000250"/>
    <property type="project" value="UniProtKB"/>
</dbReference>
<dbReference type="GO" id="GO:1903573">
    <property type="term" value="P:negative regulation of response to endoplasmic reticulum stress"/>
    <property type="evidence" value="ECO:0000250"/>
    <property type="project" value="UniProtKB"/>
</dbReference>
<dbReference type="GO" id="GO:0008284">
    <property type="term" value="P:positive regulation of cell population proliferation"/>
    <property type="evidence" value="ECO:0000250"/>
    <property type="project" value="UniProtKB"/>
</dbReference>
<dbReference type="GO" id="GO:0006486">
    <property type="term" value="P:protein glycosylation"/>
    <property type="evidence" value="ECO:0000250"/>
    <property type="project" value="UniProtKB"/>
</dbReference>
<dbReference type="GO" id="GO:0051260">
    <property type="term" value="P:protein homooligomerization"/>
    <property type="evidence" value="ECO:0000250"/>
    <property type="project" value="UniProtKB"/>
</dbReference>
<dbReference type="GO" id="GO:0006612">
    <property type="term" value="P:protein targeting to membrane"/>
    <property type="evidence" value="ECO:0000250"/>
    <property type="project" value="UniProtKB"/>
</dbReference>
<dbReference type="GO" id="GO:0072014">
    <property type="term" value="P:proximal tubule development"/>
    <property type="evidence" value="ECO:0000250"/>
    <property type="project" value="UniProtKB"/>
</dbReference>
<dbReference type="GO" id="GO:0006833">
    <property type="term" value="P:water transport"/>
    <property type="evidence" value="ECO:0000250"/>
    <property type="project" value="UniProtKB"/>
</dbReference>
<dbReference type="FunFam" id="1.20.1080.10:FF:000016">
    <property type="entry name" value="Aquaporin"/>
    <property type="match status" value="1"/>
</dbReference>
<dbReference type="Gene3D" id="1.20.1080.10">
    <property type="entry name" value="Glycerol uptake facilitator protein"/>
    <property type="match status" value="1"/>
</dbReference>
<dbReference type="InterPro" id="IPR051883">
    <property type="entry name" value="AQP11/12_channel"/>
</dbReference>
<dbReference type="InterPro" id="IPR023271">
    <property type="entry name" value="Aquaporin-like"/>
</dbReference>
<dbReference type="InterPro" id="IPR023266">
    <property type="entry name" value="Aquaporin_11"/>
</dbReference>
<dbReference type="InterPro" id="IPR016697">
    <property type="entry name" value="Aquaporin_11/12"/>
</dbReference>
<dbReference type="InterPro" id="IPR000425">
    <property type="entry name" value="MIP"/>
</dbReference>
<dbReference type="PANTHER" id="PTHR21191">
    <property type="entry name" value="AQUAPORIN"/>
    <property type="match status" value="1"/>
</dbReference>
<dbReference type="PANTHER" id="PTHR21191:SF7">
    <property type="entry name" value="AQUAPORIN-11"/>
    <property type="match status" value="1"/>
</dbReference>
<dbReference type="Pfam" id="PF00230">
    <property type="entry name" value="MIP"/>
    <property type="match status" value="1"/>
</dbReference>
<dbReference type="PIRSF" id="PIRSF017529">
    <property type="entry name" value="Aquaporin_11/12"/>
    <property type="match status" value="1"/>
</dbReference>
<dbReference type="PRINTS" id="PR02024">
    <property type="entry name" value="AQUAPORIN11"/>
</dbReference>
<dbReference type="PRINTS" id="PR00783">
    <property type="entry name" value="MINTRINSICP"/>
</dbReference>
<dbReference type="SUPFAM" id="SSF81338">
    <property type="entry name" value="Aquaporin-like"/>
    <property type="match status" value="1"/>
</dbReference>
<organism>
    <name type="scientific">Rattus norvegicus</name>
    <name type="common">Rat</name>
    <dbReference type="NCBI Taxonomy" id="10116"/>
    <lineage>
        <taxon>Eukaryota</taxon>
        <taxon>Metazoa</taxon>
        <taxon>Chordata</taxon>
        <taxon>Craniata</taxon>
        <taxon>Vertebrata</taxon>
        <taxon>Euteleostomi</taxon>
        <taxon>Mammalia</taxon>
        <taxon>Eutheria</taxon>
        <taxon>Euarchontoglires</taxon>
        <taxon>Glires</taxon>
        <taxon>Rodentia</taxon>
        <taxon>Myomorpha</taxon>
        <taxon>Muroidea</taxon>
        <taxon>Muridae</taxon>
        <taxon>Murinae</taxon>
        <taxon>Rattus</taxon>
    </lineage>
</organism>
<protein>
    <recommendedName>
        <fullName evidence="9">Aquaporin-11</fullName>
        <shortName evidence="9">AQP-11</shortName>
    </recommendedName>
</protein>
<gene>
    <name evidence="10" type="primary">Aqp11</name>
</gene>
<reference key="1">
    <citation type="submission" date="1999-02" db="EMBL/GenBank/DDBJ databases">
        <title>Cloning of a new superfamily of aquaporin.</title>
        <authorList>
            <person name="Ishibashi K."/>
            <person name="Imai M."/>
        </authorList>
    </citation>
    <scope>NUCLEOTIDE SEQUENCE [MRNA]</scope>
    <source>
        <tissue>Testis</tissue>
    </source>
</reference>
<reference key="2">
    <citation type="journal article" date="2004" name="Genome Res.">
        <title>The status, quality, and expansion of the NIH full-length cDNA project: the Mammalian Gene Collection (MGC).</title>
        <authorList>
            <consortium name="The MGC Project Team"/>
        </authorList>
    </citation>
    <scope>NUCLEOTIDE SEQUENCE [LARGE SCALE MRNA]</scope>
    <source>
        <tissue>Testis</tissue>
    </source>
</reference>
<reference key="3">
    <citation type="journal article" date="2010" name="Reproduction">
        <title>Aquaporin AQP11 in the testis: molecular identity and association with the processing of residual cytoplasm of elongated spermatids.</title>
        <authorList>
            <person name="Yeung C.H."/>
            <person name="Cooper T.G."/>
        </authorList>
    </citation>
    <scope>TISSUE SPECIFICITY</scope>
</reference>
<reference key="4">
    <citation type="journal article" date="2016" name="J. Neuroinflamm.">
        <title>Aquaporin 11, a regulator of water efflux at retinal Mueller glial cell surface decreases concomitant with immune-mediated gliosis.</title>
        <authorList>
            <person name="Deeg C.A."/>
            <person name="Amann B."/>
            <person name="Lutz K."/>
            <person name="Hirmer S."/>
            <person name="Lutterberg K."/>
            <person name="Kremmer E."/>
            <person name="Hauck S.M."/>
        </authorList>
    </citation>
    <scope>TISSUE SPECIFICITY</scope>
</reference>
<evidence type="ECO:0000250" key="1">
    <source>
        <dbReference type="UniProtKB" id="F6S3G9"/>
    </source>
</evidence>
<evidence type="ECO:0000250" key="2">
    <source>
        <dbReference type="UniProtKB" id="Q8BHH1"/>
    </source>
</evidence>
<evidence type="ECO:0000250" key="3">
    <source>
        <dbReference type="UniProtKB" id="Q8NBQ7"/>
    </source>
</evidence>
<evidence type="ECO:0000250" key="4">
    <source>
        <dbReference type="UniProtKB" id="Q96PS8"/>
    </source>
</evidence>
<evidence type="ECO:0000255" key="5"/>
<evidence type="ECO:0000269" key="6">
    <source>
    </source>
</evidence>
<evidence type="ECO:0000269" key="7">
    <source>
    </source>
</evidence>
<evidence type="ECO:0000305" key="8"/>
<evidence type="ECO:0000305" key="9">
    <source ref="1"/>
</evidence>
<evidence type="ECO:0000312" key="10">
    <source>
        <dbReference type="RGD" id="628763"/>
    </source>
</evidence>
<sequence>MSALLGLPPEVQDTCISLGLMLLVVLFMGLARVIARQQLHRPMVHAFVLEFLATFQLCYCTHELQLLSEQDSGHPTWTLTLIYFFSLVHGLTLVGTASNPCGVMMQMILGGMSPEMGAVRLMAQLVSALCSRYCISALWSLSLTKYHFDERILACRNPINTDISKAIIIEAICSFIFHSALLHFQEVRTKLRIHVLAALITFLAYAGGSLTGALFNPALALSLHFPCFDESFYKFFVVYWVAPSLGVLLMILMFSFFLPWLHNNQLSNKKE</sequence>
<name>AQP11_RAT</name>
<accession>Q8CHM1</accession>
<accession>Q6AZ79</accession>
<proteinExistence type="evidence at transcript level"/>
<feature type="chain" id="PRO_0000063970" description="Aquaporin-11">
    <location>
        <begin position="1"/>
        <end position="271"/>
    </location>
</feature>
<feature type="topological domain" description="Cytoplasmic" evidence="3">
    <location>
        <begin position="1"/>
        <end position="14"/>
    </location>
</feature>
<feature type="transmembrane region" description="Helical" evidence="5">
    <location>
        <begin position="15"/>
        <end position="35"/>
    </location>
</feature>
<feature type="topological domain" description="Lumenal" evidence="3">
    <location>
        <begin position="36"/>
        <end position="41"/>
    </location>
</feature>
<feature type="transmembrane region" description="Helical" evidence="5">
    <location>
        <begin position="42"/>
        <end position="62"/>
    </location>
</feature>
<feature type="topological domain" description="Cytoplasmic" evidence="3">
    <location>
        <begin position="63"/>
        <end position="76"/>
    </location>
</feature>
<feature type="transmembrane region" description="Helical" evidence="5">
    <location>
        <begin position="77"/>
        <end position="97"/>
    </location>
</feature>
<feature type="topological domain" description="Lumenal" evidence="3">
    <location>
        <begin position="98"/>
        <end position="166"/>
    </location>
</feature>
<feature type="transmembrane region" description="Helical" evidence="5">
    <location>
        <begin position="167"/>
        <end position="187"/>
    </location>
</feature>
<feature type="topological domain" description="Cytoplasmic" evidence="3">
    <location>
        <begin position="188"/>
        <end position="194"/>
    </location>
</feature>
<feature type="transmembrane region" description="Helical" evidence="5">
    <location>
        <begin position="195"/>
        <end position="215"/>
    </location>
</feature>
<feature type="topological domain" description="Lumenal" evidence="3">
    <location>
        <begin position="216"/>
        <end position="234"/>
    </location>
</feature>
<feature type="transmembrane region" description="Helical" evidence="5">
    <location>
        <begin position="235"/>
        <end position="255"/>
    </location>
</feature>
<feature type="topological domain" description="Cytoplasmic" evidence="3">
    <location>
        <begin position="256"/>
        <end position="271"/>
    </location>
</feature>
<feature type="short sequence motif" description="NPC" evidence="4">
    <location>
        <begin position="99"/>
        <end position="101"/>
    </location>
</feature>
<feature type="short sequence motif" description="NPA" evidence="4">
    <location>
        <begin position="216"/>
        <end position="218"/>
    </location>
</feature>
<feature type="sequence conflict" description="In Ref. 1; BAC45003." evidence="8" ref="1">
    <original>E</original>
    <variation>K</variation>
    <location>
        <position position="150"/>
    </location>
</feature>